<protein>
    <recommendedName>
        <fullName evidence="1">ATP phosphoribosyltransferase</fullName>
        <shortName evidence="1">ATP-PRT</shortName>
        <shortName evidence="1">ATP-PRTase</shortName>
        <ecNumber evidence="1">2.4.2.17</ecNumber>
    </recommendedName>
</protein>
<accession>A8FWC5</accession>
<sequence>MPESKRLRIAIQKSGRLSIESMKLLKSCGVKFTVNEQRLIAHSDNMPIDLLRVRDDDIPGLVMDGVVDMGIIGENVLEEEQIERERLDKPSTCIKLRELDFGACRLSLAVPNEFNYEDAASLEGLRIATSYPNLLRRYMQRKGITYNDCMLKGSVEVAPRAGLSDAICDLVSTGATLEANGLYETEVIYQSKACIIQSSQPQEPAKQALIDKILSRINGVVRAKESKYILLHAPTETLEQIVALLPGAENPTVLPLNDDTNRVAIHAVSTEDLFWDTMEELTKLGASSILVMPIEKMMG</sequence>
<evidence type="ECO:0000255" key="1">
    <source>
        <dbReference type="HAMAP-Rule" id="MF_00079"/>
    </source>
</evidence>
<dbReference type="EC" id="2.4.2.17" evidence="1"/>
<dbReference type="EMBL" id="CP000821">
    <property type="protein sequence ID" value="ABV37148.1"/>
    <property type="molecule type" value="Genomic_DNA"/>
</dbReference>
<dbReference type="RefSeq" id="WP_012142881.1">
    <property type="nucleotide sequence ID" value="NC_009831.1"/>
</dbReference>
<dbReference type="SMR" id="A8FWC5"/>
<dbReference type="STRING" id="425104.Ssed_2541"/>
<dbReference type="KEGG" id="sse:Ssed_2541"/>
<dbReference type="eggNOG" id="COG0040">
    <property type="taxonomic scope" value="Bacteria"/>
</dbReference>
<dbReference type="HOGENOM" id="CLU_038115_1_0_6"/>
<dbReference type="OrthoDB" id="9801867at2"/>
<dbReference type="UniPathway" id="UPA00031">
    <property type="reaction ID" value="UER00006"/>
</dbReference>
<dbReference type="Proteomes" id="UP000002015">
    <property type="component" value="Chromosome"/>
</dbReference>
<dbReference type="GO" id="GO:0005737">
    <property type="term" value="C:cytoplasm"/>
    <property type="evidence" value="ECO:0007669"/>
    <property type="project" value="UniProtKB-SubCell"/>
</dbReference>
<dbReference type="GO" id="GO:0005524">
    <property type="term" value="F:ATP binding"/>
    <property type="evidence" value="ECO:0007669"/>
    <property type="project" value="UniProtKB-KW"/>
</dbReference>
<dbReference type="GO" id="GO:0003879">
    <property type="term" value="F:ATP phosphoribosyltransferase activity"/>
    <property type="evidence" value="ECO:0007669"/>
    <property type="project" value="UniProtKB-UniRule"/>
</dbReference>
<dbReference type="GO" id="GO:0000287">
    <property type="term" value="F:magnesium ion binding"/>
    <property type="evidence" value="ECO:0007669"/>
    <property type="project" value="UniProtKB-UniRule"/>
</dbReference>
<dbReference type="GO" id="GO:0000105">
    <property type="term" value="P:L-histidine biosynthetic process"/>
    <property type="evidence" value="ECO:0007669"/>
    <property type="project" value="UniProtKB-UniRule"/>
</dbReference>
<dbReference type="CDD" id="cd13592">
    <property type="entry name" value="PBP2_HisGL2"/>
    <property type="match status" value="1"/>
</dbReference>
<dbReference type="FunFam" id="3.30.70.120:FF:000002">
    <property type="entry name" value="ATP phosphoribosyltransferase"/>
    <property type="match status" value="1"/>
</dbReference>
<dbReference type="FunFam" id="3.40.190.10:FF:000008">
    <property type="entry name" value="ATP phosphoribosyltransferase"/>
    <property type="match status" value="1"/>
</dbReference>
<dbReference type="Gene3D" id="3.30.70.120">
    <property type="match status" value="1"/>
</dbReference>
<dbReference type="Gene3D" id="3.40.190.10">
    <property type="entry name" value="Periplasmic binding protein-like II"/>
    <property type="match status" value="2"/>
</dbReference>
<dbReference type="HAMAP" id="MF_00079">
    <property type="entry name" value="HisG_Long"/>
    <property type="match status" value="1"/>
</dbReference>
<dbReference type="InterPro" id="IPR020621">
    <property type="entry name" value="ATP-PRT_HisG_long"/>
</dbReference>
<dbReference type="InterPro" id="IPR013820">
    <property type="entry name" value="ATP_PRibTrfase_cat"/>
</dbReference>
<dbReference type="InterPro" id="IPR018198">
    <property type="entry name" value="ATP_PRibTrfase_CS"/>
</dbReference>
<dbReference type="InterPro" id="IPR001348">
    <property type="entry name" value="ATP_PRibTrfase_HisG"/>
</dbReference>
<dbReference type="InterPro" id="IPR013115">
    <property type="entry name" value="HisG_C"/>
</dbReference>
<dbReference type="InterPro" id="IPR011322">
    <property type="entry name" value="N-reg_PII-like_a/b"/>
</dbReference>
<dbReference type="InterPro" id="IPR015867">
    <property type="entry name" value="N-reg_PII/ATP_PRibTrfase_C"/>
</dbReference>
<dbReference type="NCBIfam" id="TIGR00070">
    <property type="entry name" value="hisG"/>
    <property type="match status" value="1"/>
</dbReference>
<dbReference type="NCBIfam" id="TIGR03455">
    <property type="entry name" value="HisG_C-term"/>
    <property type="match status" value="1"/>
</dbReference>
<dbReference type="PANTHER" id="PTHR21403:SF8">
    <property type="entry name" value="ATP PHOSPHORIBOSYLTRANSFERASE"/>
    <property type="match status" value="1"/>
</dbReference>
<dbReference type="PANTHER" id="PTHR21403">
    <property type="entry name" value="ATP PHOSPHORIBOSYLTRANSFERASE ATP-PRTASE"/>
    <property type="match status" value="1"/>
</dbReference>
<dbReference type="Pfam" id="PF01634">
    <property type="entry name" value="HisG"/>
    <property type="match status" value="1"/>
</dbReference>
<dbReference type="Pfam" id="PF08029">
    <property type="entry name" value="HisG_C"/>
    <property type="match status" value="1"/>
</dbReference>
<dbReference type="SUPFAM" id="SSF54913">
    <property type="entry name" value="GlnB-like"/>
    <property type="match status" value="1"/>
</dbReference>
<dbReference type="SUPFAM" id="SSF53850">
    <property type="entry name" value="Periplasmic binding protein-like II"/>
    <property type="match status" value="1"/>
</dbReference>
<dbReference type="PROSITE" id="PS01316">
    <property type="entry name" value="ATP_P_PHORIBOSYLTR"/>
    <property type="match status" value="1"/>
</dbReference>
<reference key="1">
    <citation type="submission" date="2007-08" db="EMBL/GenBank/DDBJ databases">
        <title>Complete sequence of Shewanella sediminis HAW-EB3.</title>
        <authorList>
            <consortium name="US DOE Joint Genome Institute"/>
            <person name="Copeland A."/>
            <person name="Lucas S."/>
            <person name="Lapidus A."/>
            <person name="Barry K."/>
            <person name="Glavina del Rio T."/>
            <person name="Dalin E."/>
            <person name="Tice H."/>
            <person name="Pitluck S."/>
            <person name="Chertkov O."/>
            <person name="Brettin T."/>
            <person name="Bruce D."/>
            <person name="Detter J.C."/>
            <person name="Han C."/>
            <person name="Schmutz J."/>
            <person name="Larimer F."/>
            <person name="Land M."/>
            <person name="Hauser L."/>
            <person name="Kyrpides N."/>
            <person name="Kim E."/>
            <person name="Zhao J.-S."/>
            <person name="Richardson P."/>
        </authorList>
    </citation>
    <scope>NUCLEOTIDE SEQUENCE [LARGE SCALE GENOMIC DNA]</scope>
    <source>
        <strain>HAW-EB3</strain>
    </source>
</reference>
<name>HIS1_SHESH</name>
<keyword id="KW-0028">Amino-acid biosynthesis</keyword>
<keyword id="KW-0067">ATP-binding</keyword>
<keyword id="KW-0963">Cytoplasm</keyword>
<keyword id="KW-0328">Glycosyltransferase</keyword>
<keyword id="KW-0368">Histidine biosynthesis</keyword>
<keyword id="KW-0460">Magnesium</keyword>
<keyword id="KW-0479">Metal-binding</keyword>
<keyword id="KW-0547">Nucleotide-binding</keyword>
<keyword id="KW-1185">Reference proteome</keyword>
<keyword id="KW-0808">Transferase</keyword>
<gene>
    <name evidence="1" type="primary">hisG</name>
    <name type="ordered locus">Ssed_2541</name>
</gene>
<feature type="chain" id="PRO_1000075268" description="ATP phosphoribosyltransferase">
    <location>
        <begin position="1"/>
        <end position="299"/>
    </location>
</feature>
<comment type="function">
    <text evidence="1">Catalyzes the condensation of ATP and 5-phosphoribose 1-diphosphate to form N'-(5'-phosphoribosyl)-ATP (PR-ATP). Has a crucial role in the pathway because the rate of histidine biosynthesis seems to be controlled primarily by regulation of HisG enzymatic activity.</text>
</comment>
<comment type="catalytic activity">
    <reaction evidence="1">
        <text>1-(5-phospho-beta-D-ribosyl)-ATP + diphosphate = 5-phospho-alpha-D-ribose 1-diphosphate + ATP</text>
        <dbReference type="Rhea" id="RHEA:18473"/>
        <dbReference type="ChEBI" id="CHEBI:30616"/>
        <dbReference type="ChEBI" id="CHEBI:33019"/>
        <dbReference type="ChEBI" id="CHEBI:58017"/>
        <dbReference type="ChEBI" id="CHEBI:73183"/>
        <dbReference type="EC" id="2.4.2.17"/>
    </reaction>
</comment>
<comment type="cofactor">
    <cofactor evidence="1">
        <name>Mg(2+)</name>
        <dbReference type="ChEBI" id="CHEBI:18420"/>
    </cofactor>
</comment>
<comment type="activity regulation">
    <text evidence="1">Feedback inhibited by histidine.</text>
</comment>
<comment type="pathway">
    <text evidence="1">Amino-acid biosynthesis; L-histidine biosynthesis; L-histidine from 5-phospho-alpha-D-ribose 1-diphosphate: step 1/9.</text>
</comment>
<comment type="subcellular location">
    <subcellularLocation>
        <location evidence="1">Cytoplasm</location>
    </subcellularLocation>
</comment>
<comment type="similarity">
    <text evidence="1">Belongs to the ATP phosphoribosyltransferase family. Long subfamily.</text>
</comment>
<organism>
    <name type="scientific">Shewanella sediminis (strain HAW-EB3)</name>
    <dbReference type="NCBI Taxonomy" id="425104"/>
    <lineage>
        <taxon>Bacteria</taxon>
        <taxon>Pseudomonadati</taxon>
        <taxon>Pseudomonadota</taxon>
        <taxon>Gammaproteobacteria</taxon>
        <taxon>Alteromonadales</taxon>
        <taxon>Shewanellaceae</taxon>
        <taxon>Shewanella</taxon>
    </lineage>
</organism>
<proteinExistence type="inferred from homology"/>